<gene>
    <name evidence="1" type="primary">thrS</name>
    <name type="ordered locus">lpp2770</name>
</gene>
<dbReference type="EC" id="6.1.1.3" evidence="1"/>
<dbReference type="EMBL" id="CR628336">
    <property type="protein sequence ID" value="CAH13923.1"/>
    <property type="molecule type" value="Genomic_DNA"/>
</dbReference>
<dbReference type="RefSeq" id="WP_015961769.1">
    <property type="nucleotide sequence ID" value="NC_006368.1"/>
</dbReference>
<dbReference type="SMR" id="Q5X1H3"/>
<dbReference type="KEGG" id="lpp:lpp2770"/>
<dbReference type="LegioList" id="lpp2770"/>
<dbReference type="HOGENOM" id="CLU_008554_0_1_6"/>
<dbReference type="GO" id="GO:0005737">
    <property type="term" value="C:cytoplasm"/>
    <property type="evidence" value="ECO:0007669"/>
    <property type="project" value="UniProtKB-SubCell"/>
</dbReference>
<dbReference type="GO" id="GO:0005524">
    <property type="term" value="F:ATP binding"/>
    <property type="evidence" value="ECO:0007669"/>
    <property type="project" value="UniProtKB-UniRule"/>
</dbReference>
<dbReference type="GO" id="GO:0046872">
    <property type="term" value="F:metal ion binding"/>
    <property type="evidence" value="ECO:0007669"/>
    <property type="project" value="UniProtKB-KW"/>
</dbReference>
<dbReference type="GO" id="GO:0004829">
    <property type="term" value="F:threonine-tRNA ligase activity"/>
    <property type="evidence" value="ECO:0007669"/>
    <property type="project" value="UniProtKB-UniRule"/>
</dbReference>
<dbReference type="GO" id="GO:0000049">
    <property type="term" value="F:tRNA binding"/>
    <property type="evidence" value="ECO:0007669"/>
    <property type="project" value="UniProtKB-KW"/>
</dbReference>
<dbReference type="GO" id="GO:0006435">
    <property type="term" value="P:threonyl-tRNA aminoacylation"/>
    <property type="evidence" value="ECO:0007669"/>
    <property type="project" value="UniProtKB-UniRule"/>
</dbReference>
<dbReference type="CDD" id="cd01667">
    <property type="entry name" value="TGS_ThrRS"/>
    <property type="match status" value="1"/>
</dbReference>
<dbReference type="CDD" id="cd00860">
    <property type="entry name" value="ThrRS_anticodon"/>
    <property type="match status" value="1"/>
</dbReference>
<dbReference type="CDD" id="cd00771">
    <property type="entry name" value="ThrRS_core"/>
    <property type="match status" value="1"/>
</dbReference>
<dbReference type="FunFam" id="3.10.20.30:FF:000005">
    <property type="entry name" value="Threonine--tRNA ligase"/>
    <property type="match status" value="1"/>
</dbReference>
<dbReference type="FunFam" id="3.30.54.20:FF:000002">
    <property type="entry name" value="Threonine--tRNA ligase"/>
    <property type="match status" value="1"/>
</dbReference>
<dbReference type="FunFam" id="3.30.930.10:FF:000002">
    <property type="entry name" value="Threonine--tRNA ligase"/>
    <property type="match status" value="1"/>
</dbReference>
<dbReference type="FunFam" id="3.40.50.800:FF:000001">
    <property type="entry name" value="Threonine--tRNA ligase"/>
    <property type="match status" value="1"/>
</dbReference>
<dbReference type="FunFam" id="3.30.980.10:FF:000005">
    <property type="entry name" value="Threonyl-tRNA synthetase, mitochondrial"/>
    <property type="match status" value="1"/>
</dbReference>
<dbReference type="Gene3D" id="3.10.20.30">
    <property type="match status" value="1"/>
</dbReference>
<dbReference type="Gene3D" id="3.30.54.20">
    <property type="match status" value="1"/>
</dbReference>
<dbReference type="Gene3D" id="3.40.50.800">
    <property type="entry name" value="Anticodon-binding domain"/>
    <property type="match status" value="1"/>
</dbReference>
<dbReference type="Gene3D" id="3.30.930.10">
    <property type="entry name" value="Bira Bifunctional Protein, Domain 2"/>
    <property type="match status" value="1"/>
</dbReference>
<dbReference type="Gene3D" id="3.30.980.10">
    <property type="entry name" value="Threonyl-trna Synthetase, Chain A, domain 2"/>
    <property type="match status" value="1"/>
</dbReference>
<dbReference type="HAMAP" id="MF_00184">
    <property type="entry name" value="Thr_tRNA_synth"/>
    <property type="match status" value="1"/>
</dbReference>
<dbReference type="InterPro" id="IPR002314">
    <property type="entry name" value="aa-tRNA-synt_IIb"/>
</dbReference>
<dbReference type="InterPro" id="IPR006195">
    <property type="entry name" value="aa-tRNA-synth_II"/>
</dbReference>
<dbReference type="InterPro" id="IPR045864">
    <property type="entry name" value="aa-tRNA-synth_II/BPL/LPL"/>
</dbReference>
<dbReference type="InterPro" id="IPR004154">
    <property type="entry name" value="Anticodon-bd"/>
</dbReference>
<dbReference type="InterPro" id="IPR036621">
    <property type="entry name" value="Anticodon-bd_dom_sf"/>
</dbReference>
<dbReference type="InterPro" id="IPR012675">
    <property type="entry name" value="Beta-grasp_dom_sf"/>
</dbReference>
<dbReference type="InterPro" id="IPR004095">
    <property type="entry name" value="TGS"/>
</dbReference>
<dbReference type="InterPro" id="IPR012676">
    <property type="entry name" value="TGS-like"/>
</dbReference>
<dbReference type="InterPro" id="IPR002320">
    <property type="entry name" value="Thr-tRNA-ligase_IIa"/>
</dbReference>
<dbReference type="InterPro" id="IPR018163">
    <property type="entry name" value="Thr/Ala-tRNA-synth_IIc_edit"/>
</dbReference>
<dbReference type="InterPro" id="IPR047246">
    <property type="entry name" value="ThrRS_anticodon"/>
</dbReference>
<dbReference type="InterPro" id="IPR033728">
    <property type="entry name" value="ThrRS_core"/>
</dbReference>
<dbReference type="InterPro" id="IPR012947">
    <property type="entry name" value="tRNA_SAD"/>
</dbReference>
<dbReference type="NCBIfam" id="TIGR00418">
    <property type="entry name" value="thrS"/>
    <property type="match status" value="1"/>
</dbReference>
<dbReference type="PANTHER" id="PTHR11451:SF44">
    <property type="entry name" value="THREONINE--TRNA LIGASE, CHLOROPLASTIC_MITOCHONDRIAL 2"/>
    <property type="match status" value="1"/>
</dbReference>
<dbReference type="PANTHER" id="PTHR11451">
    <property type="entry name" value="THREONINE-TRNA LIGASE"/>
    <property type="match status" value="1"/>
</dbReference>
<dbReference type="Pfam" id="PF03129">
    <property type="entry name" value="HGTP_anticodon"/>
    <property type="match status" value="1"/>
</dbReference>
<dbReference type="Pfam" id="PF02824">
    <property type="entry name" value="TGS"/>
    <property type="match status" value="1"/>
</dbReference>
<dbReference type="Pfam" id="PF00587">
    <property type="entry name" value="tRNA-synt_2b"/>
    <property type="match status" value="1"/>
</dbReference>
<dbReference type="Pfam" id="PF07973">
    <property type="entry name" value="tRNA_SAD"/>
    <property type="match status" value="1"/>
</dbReference>
<dbReference type="PRINTS" id="PR01047">
    <property type="entry name" value="TRNASYNTHTHR"/>
</dbReference>
<dbReference type="SMART" id="SM00863">
    <property type="entry name" value="tRNA_SAD"/>
    <property type="match status" value="1"/>
</dbReference>
<dbReference type="SUPFAM" id="SSF52954">
    <property type="entry name" value="Class II aaRS ABD-related"/>
    <property type="match status" value="1"/>
</dbReference>
<dbReference type="SUPFAM" id="SSF55681">
    <property type="entry name" value="Class II aaRS and biotin synthetases"/>
    <property type="match status" value="1"/>
</dbReference>
<dbReference type="SUPFAM" id="SSF81271">
    <property type="entry name" value="TGS-like"/>
    <property type="match status" value="1"/>
</dbReference>
<dbReference type="SUPFAM" id="SSF55186">
    <property type="entry name" value="ThrRS/AlaRS common domain"/>
    <property type="match status" value="1"/>
</dbReference>
<dbReference type="PROSITE" id="PS50862">
    <property type="entry name" value="AA_TRNA_LIGASE_II"/>
    <property type="match status" value="1"/>
</dbReference>
<dbReference type="PROSITE" id="PS51880">
    <property type="entry name" value="TGS"/>
    <property type="match status" value="1"/>
</dbReference>
<accession>Q5X1H3</accession>
<protein>
    <recommendedName>
        <fullName evidence="1">Threonine--tRNA ligase</fullName>
        <ecNumber evidence="1">6.1.1.3</ecNumber>
    </recommendedName>
    <alternativeName>
        <fullName evidence="1">Threonyl-tRNA synthetase</fullName>
        <shortName evidence="1">ThrRS</shortName>
    </alternativeName>
</protein>
<organism>
    <name type="scientific">Legionella pneumophila (strain Paris)</name>
    <dbReference type="NCBI Taxonomy" id="297246"/>
    <lineage>
        <taxon>Bacteria</taxon>
        <taxon>Pseudomonadati</taxon>
        <taxon>Pseudomonadota</taxon>
        <taxon>Gammaproteobacteria</taxon>
        <taxon>Legionellales</taxon>
        <taxon>Legionellaceae</taxon>
        <taxon>Legionella</taxon>
    </lineage>
</organism>
<proteinExistence type="inferred from homology"/>
<keyword id="KW-0030">Aminoacyl-tRNA synthetase</keyword>
<keyword id="KW-0067">ATP-binding</keyword>
<keyword id="KW-0963">Cytoplasm</keyword>
<keyword id="KW-0436">Ligase</keyword>
<keyword id="KW-0479">Metal-binding</keyword>
<keyword id="KW-0547">Nucleotide-binding</keyword>
<keyword id="KW-0648">Protein biosynthesis</keyword>
<keyword id="KW-0694">RNA-binding</keyword>
<keyword id="KW-0820">tRNA-binding</keyword>
<keyword id="KW-0862">Zinc</keyword>
<reference key="1">
    <citation type="journal article" date="2004" name="Nat. Genet.">
        <title>Evidence in the Legionella pneumophila genome for exploitation of host cell functions and high genome plasticity.</title>
        <authorList>
            <person name="Cazalet C."/>
            <person name="Rusniok C."/>
            <person name="Brueggemann H."/>
            <person name="Zidane N."/>
            <person name="Magnier A."/>
            <person name="Ma L."/>
            <person name="Tichit M."/>
            <person name="Jarraud S."/>
            <person name="Bouchier C."/>
            <person name="Vandenesch F."/>
            <person name="Kunst F."/>
            <person name="Etienne J."/>
            <person name="Glaser P."/>
            <person name="Buchrieser C."/>
        </authorList>
    </citation>
    <scope>NUCLEOTIDE SEQUENCE [LARGE SCALE GENOMIC DNA]</scope>
    <source>
        <strain>Paris</strain>
    </source>
</reference>
<comment type="function">
    <text evidence="1">Catalyzes the attachment of threonine to tRNA(Thr) in a two-step reaction: L-threonine is first activated by ATP to form Thr-AMP and then transferred to the acceptor end of tRNA(Thr). Also edits incorrectly charged L-seryl-tRNA(Thr).</text>
</comment>
<comment type="catalytic activity">
    <reaction evidence="1">
        <text>tRNA(Thr) + L-threonine + ATP = L-threonyl-tRNA(Thr) + AMP + diphosphate + H(+)</text>
        <dbReference type="Rhea" id="RHEA:24624"/>
        <dbReference type="Rhea" id="RHEA-COMP:9670"/>
        <dbReference type="Rhea" id="RHEA-COMP:9704"/>
        <dbReference type="ChEBI" id="CHEBI:15378"/>
        <dbReference type="ChEBI" id="CHEBI:30616"/>
        <dbReference type="ChEBI" id="CHEBI:33019"/>
        <dbReference type="ChEBI" id="CHEBI:57926"/>
        <dbReference type="ChEBI" id="CHEBI:78442"/>
        <dbReference type="ChEBI" id="CHEBI:78534"/>
        <dbReference type="ChEBI" id="CHEBI:456215"/>
        <dbReference type="EC" id="6.1.1.3"/>
    </reaction>
</comment>
<comment type="cofactor">
    <cofactor evidence="1">
        <name>Zn(2+)</name>
        <dbReference type="ChEBI" id="CHEBI:29105"/>
    </cofactor>
    <text evidence="1">Binds 1 zinc ion per subunit.</text>
</comment>
<comment type="subunit">
    <text evidence="1">Homodimer.</text>
</comment>
<comment type="subcellular location">
    <subcellularLocation>
        <location evidence="1">Cytoplasm</location>
    </subcellularLocation>
</comment>
<comment type="similarity">
    <text evidence="1">Belongs to the class-II aminoacyl-tRNA synthetase family.</text>
</comment>
<sequence>MPNVKLPDGNVKHFEAPLTIYDVAHHISPGLAKAAIAGRVDGVLVDTSYLIKEDCSLIIVTEKHEDSLEIIRHSTAHLLAQAVKALFPSAQVTIGPVIEDGFYYDFAFERSFTPDDLSLIEAKMHELAKANLSITRRELPRNEAIQYFKGLGEEYKAKIIADIPENEALSLYRQGDFEDLCRGPHVPSTGFLKAFKLTKVAGAYWRGDSNNEMLQRIYGTAWADKKSLEEYLFRLEEAEKRDHRKLGKALDLFHFQDIAPGMVFWHPKGWTIYQELEHYMRNRLVDFGYQEIRTPQLVDRSLWEKSGHWANFRDEMFVTETENRHYAVKPMSCPCHVQIYNHGLKSYRDLPLRLSEFGNCHRCEPSGALHGLMRVRNMVQDDAHIFCTEDQIQSEVAMMLELVQSVYKDFGFTEIKYRLALRPEKRVGSDDVWDKAETALKLAMLGRNIEWVDAPGEGAFYGPKIECSLSDCLGRIWQCGTIQVDFSMPARLEASYVAEDGSKQTPVMLHRAILGSFERFMGILIEHYAGKLPLWLSPVQAVVLTISEKQNEYAEKVRKTLQKRGIRANFDLRNEKIGFKIREHTLQKIPYLLVVGDKEVENCQVAVRTRDGIDLGVMTIDTICDTLTQEIIRKGSI</sequence>
<evidence type="ECO:0000255" key="1">
    <source>
        <dbReference type="HAMAP-Rule" id="MF_00184"/>
    </source>
</evidence>
<evidence type="ECO:0000255" key="2">
    <source>
        <dbReference type="PROSITE-ProRule" id="PRU01228"/>
    </source>
</evidence>
<name>SYT_LEGPA</name>
<feature type="chain" id="PRO_0000100996" description="Threonine--tRNA ligase">
    <location>
        <begin position="1"/>
        <end position="637"/>
    </location>
</feature>
<feature type="domain" description="TGS" evidence="2">
    <location>
        <begin position="1"/>
        <end position="61"/>
    </location>
</feature>
<feature type="region of interest" description="Catalytic" evidence="1">
    <location>
        <begin position="242"/>
        <end position="533"/>
    </location>
</feature>
<feature type="binding site" evidence="1">
    <location>
        <position position="333"/>
    </location>
    <ligand>
        <name>Zn(2+)</name>
        <dbReference type="ChEBI" id="CHEBI:29105"/>
    </ligand>
</feature>
<feature type="binding site" evidence="1">
    <location>
        <position position="384"/>
    </location>
    <ligand>
        <name>Zn(2+)</name>
        <dbReference type="ChEBI" id="CHEBI:29105"/>
    </ligand>
</feature>
<feature type="binding site" evidence="1">
    <location>
        <position position="510"/>
    </location>
    <ligand>
        <name>Zn(2+)</name>
        <dbReference type="ChEBI" id="CHEBI:29105"/>
    </ligand>
</feature>